<dbReference type="EMBL" id="AF527626">
    <property type="protein sequence ID" value="AAN28327.1"/>
    <property type="molecule type" value="mRNA"/>
</dbReference>
<dbReference type="EMBL" id="BC045341">
    <property type="protein sequence ID" value="AAH45341.1"/>
    <property type="molecule type" value="mRNA"/>
</dbReference>
<dbReference type="RefSeq" id="NP_956163.1">
    <property type="nucleotide sequence ID" value="NM_199869.1"/>
</dbReference>
<dbReference type="SMR" id="Q8AV61"/>
<dbReference type="FunCoup" id="Q8AV61">
    <property type="interactions" value="4"/>
</dbReference>
<dbReference type="STRING" id="7955.ENSDARP00000018378"/>
<dbReference type="PaxDb" id="7955-ENSDARP00000104993"/>
<dbReference type="Ensembl" id="ENSDART00000013785">
    <property type="protein sequence ID" value="ENSDARP00000018378"/>
    <property type="gene ID" value="ENSDARG00000010658"/>
</dbReference>
<dbReference type="Ensembl" id="ENSDART00000185074">
    <property type="protein sequence ID" value="ENSDARP00000147776"/>
    <property type="gene ID" value="ENSDARG00000113413"/>
</dbReference>
<dbReference type="GeneID" id="334189"/>
<dbReference type="KEGG" id="dre:334189"/>
<dbReference type="AGR" id="ZFIN:ZDB-GENE-030131-6121"/>
<dbReference type="CTD" id="3638"/>
<dbReference type="ZFIN" id="ZDB-GENE-030131-6121">
    <property type="gene designation" value="insig1"/>
</dbReference>
<dbReference type="eggNOG" id="KOG4363">
    <property type="taxonomic scope" value="Eukaryota"/>
</dbReference>
<dbReference type="HOGENOM" id="CLU_092922_0_0_1"/>
<dbReference type="InParanoid" id="Q8AV61"/>
<dbReference type="OMA" id="FQIHNCA"/>
<dbReference type="OrthoDB" id="205546at2759"/>
<dbReference type="PhylomeDB" id="Q8AV61"/>
<dbReference type="TreeFam" id="TF331013"/>
<dbReference type="PRO" id="PR:Q8AV61"/>
<dbReference type="Proteomes" id="UP000000437">
    <property type="component" value="Alternate scaffold 7"/>
</dbReference>
<dbReference type="Proteomes" id="UP000000437">
    <property type="component" value="Chromosome 7"/>
</dbReference>
<dbReference type="Bgee" id="ENSDARG00000010658">
    <property type="expression patterns" value="Expressed in intestine and 27 other cell types or tissues"/>
</dbReference>
<dbReference type="ExpressionAtlas" id="Q8AV61">
    <property type="expression patterns" value="baseline and differential"/>
</dbReference>
<dbReference type="GO" id="GO:0005783">
    <property type="term" value="C:endoplasmic reticulum"/>
    <property type="evidence" value="ECO:0000318"/>
    <property type="project" value="GO_Central"/>
</dbReference>
<dbReference type="GO" id="GO:0032937">
    <property type="term" value="C:SREBP-SCAP-Insig complex"/>
    <property type="evidence" value="ECO:0000318"/>
    <property type="project" value="GO_Central"/>
</dbReference>
<dbReference type="GO" id="GO:0008142">
    <property type="term" value="F:oxysterol binding"/>
    <property type="evidence" value="ECO:0000250"/>
    <property type="project" value="UniProtKB"/>
</dbReference>
<dbReference type="GO" id="GO:0032869">
    <property type="term" value="P:cellular response to insulin stimulus"/>
    <property type="evidence" value="ECO:0000318"/>
    <property type="project" value="GO_Central"/>
</dbReference>
<dbReference type="GO" id="GO:0006695">
    <property type="term" value="P:cholesterol biosynthetic process"/>
    <property type="evidence" value="ECO:0000318"/>
    <property type="project" value="GO_Central"/>
</dbReference>
<dbReference type="GO" id="GO:0032933">
    <property type="term" value="P:SREBP signaling pathway"/>
    <property type="evidence" value="ECO:0000318"/>
    <property type="project" value="GO_Central"/>
</dbReference>
<dbReference type="GO" id="GO:0036316">
    <property type="term" value="P:SREBP-SCAP complex retention in endoplasmic reticulum"/>
    <property type="evidence" value="ECO:0000318"/>
    <property type="project" value="GO_Central"/>
</dbReference>
<dbReference type="InterPro" id="IPR025929">
    <property type="entry name" value="INSIG_fam"/>
</dbReference>
<dbReference type="PANTHER" id="PTHR15301">
    <property type="entry name" value="INSULIN-INDUCED GENE 1"/>
    <property type="match status" value="1"/>
</dbReference>
<dbReference type="PANTHER" id="PTHR15301:SF11">
    <property type="entry name" value="INSULIN-INDUCED GENE 1 PROTEIN"/>
    <property type="match status" value="1"/>
</dbReference>
<dbReference type="Pfam" id="PF07281">
    <property type="entry name" value="INSIG"/>
    <property type="match status" value="1"/>
</dbReference>
<name>INSI1_DANRE</name>
<accession>Q8AV61</accession>
<gene>
    <name evidence="4" type="primary">insig1</name>
</gene>
<sequence length="251" mass="27596">MPRLEEHCWSCSCSTSVKTKDLSSAGWIVCKTGEMMSIITSVLSHAYGSLHSLQSANLIRRGLVLFIVGVVLALVLNLLQIQRNVTLFPEEVLDTLFSSAWWIPLCCGTAAAVVGLLYPCLDHHLGEPHKFKREWASVMRCIAVFVGINHASAKLDFANNVQLSLTLAALSLGLWWTFDRSRSGFGLGLTTALLATLIAQLLVYNGIYQYTSPDFLYVRSWLPCIFFSGGVTVGNIGRQLAMGSTEKIHND</sequence>
<feature type="chain" id="PRO_0000287389" description="Insulin-induced gene 1 protein">
    <location>
        <begin position="1"/>
        <end position="251"/>
    </location>
</feature>
<feature type="topological domain" description="Cytoplasmic" evidence="2">
    <location>
        <begin position="1"/>
        <end position="58"/>
    </location>
</feature>
<feature type="transmembrane region" description="Helical; Name=1" evidence="1">
    <location>
        <begin position="59"/>
        <end position="81"/>
    </location>
</feature>
<feature type="topological domain" description="Extracellular" evidence="5">
    <location>
        <begin position="82"/>
        <end position="100"/>
    </location>
</feature>
<feature type="transmembrane region" description="Helical; Name=2" evidence="1">
    <location>
        <begin position="101"/>
        <end position="118"/>
    </location>
</feature>
<feature type="topological domain" description="Cytoplasmic" evidence="5">
    <location>
        <begin position="119"/>
        <end position="133"/>
    </location>
</feature>
<feature type="transmembrane region" description="Helical; Name=3" evidence="1">
    <location>
        <begin position="134"/>
        <end position="156"/>
    </location>
</feature>
<feature type="topological domain" description="Extracellular" evidence="5">
    <location>
        <begin position="157"/>
        <end position="159"/>
    </location>
</feature>
<feature type="transmembrane region" description="Helical; Name=4" evidence="1">
    <location>
        <begin position="160"/>
        <end position="178"/>
    </location>
</feature>
<feature type="topological domain" description="Cytoplasmic" evidence="2">
    <location>
        <begin position="179"/>
        <end position="183"/>
    </location>
</feature>
<feature type="transmembrane region" description="Helical; Name=5" evidence="1">
    <location>
        <begin position="184"/>
        <end position="205"/>
    </location>
</feature>
<feature type="topological domain" description="Extracellular" evidence="5">
    <location>
        <begin position="206"/>
        <end position="219"/>
    </location>
</feature>
<feature type="transmembrane region" description="Helical; Name=6" evidence="1">
    <location>
        <begin position="220"/>
        <end position="237"/>
    </location>
</feature>
<feature type="topological domain" description="Cytoplasmic" evidence="2 5">
    <location>
        <begin position="238"/>
        <end position="251"/>
    </location>
</feature>
<feature type="short sequence motif" description="KxHxx" evidence="2">
    <location>
        <begin position="245"/>
        <end position="251"/>
    </location>
</feature>
<feature type="site" description="Required for the recognition of 25-hydroxycholesterol" evidence="3">
    <location>
        <position position="145"/>
    </location>
</feature>
<reference key="1">
    <citation type="journal article" date="2002" name="Proc. Natl. Acad. Sci. U.S.A.">
        <title>Insig-2, a second endoplasmic reticulum protein that binds SCAP and blocks export of sterol regulatory element-binding proteins.</title>
        <authorList>
            <person name="Yabe D."/>
            <person name="Brown M.S."/>
            <person name="Goldstein J.L."/>
        </authorList>
    </citation>
    <scope>NUCLEOTIDE SEQUENCE [MRNA]</scope>
</reference>
<reference key="2">
    <citation type="submission" date="2003-01" db="EMBL/GenBank/DDBJ databases">
        <authorList>
            <consortium name="NIH - Zebrafish Gene Collection (ZGC) project"/>
        </authorList>
    </citation>
    <scope>NUCLEOTIDE SEQUENCE [LARGE SCALE MRNA]</scope>
    <source>
        <strain>AB</strain>
        <tissue>Embryo</tissue>
    </source>
</reference>
<keyword id="KW-0153">Cholesterol metabolism</keyword>
<keyword id="KW-0256">Endoplasmic reticulum</keyword>
<keyword id="KW-0443">Lipid metabolism</keyword>
<keyword id="KW-0446">Lipid-binding</keyword>
<keyword id="KW-0472">Membrane</keyword>
<keyword id="KW-1185">Reference proteome</keyword>
<keyword id="KW-0753">Steroid metabolism</keyword>
<keyword id="KW-1207">Sterol metabolism</keyword>
<keyword id="KW-0812">Transmembrane</keyword>
<keyword id="KW-1133">Transmembrane helix</keyword>
<proteinExistence type="evidence at transcript level"/>
<organism>
    <name type="scientific">Danio rerio</name>
    <name type="common">Zebrafish</name>
    <name type="synonym">Brachydanio rerio</name>
    <dbReference type="NCBI Taxonomy" id="7955"/>
    <lineage>
        <taxon>Eukaryota</taxon>
        <taxon>Metazoa</taxon>
        <taxon>Chordata</taxon>
        <taxon>Craniata</taxon>
        <taxon>Vertebrata</taxon>
        <taxon>Euteleostomi</taxon>
        <taxon>Actinopterygii</taxon>
        <taxon>Neopterygii</taxon>
        <taxon>Teleostei</taxon>
        <taxon>Ostariophysi</taxon>
        <taxon>Cypriniformes</taxon>
        <taxon>Danionidae</taxon>
        <taxon>Danioninae</taxon>
        <taxon>Danio</taxon>
    </lineage>
</organism>
<evidence type="ECO:0000250" key="1">
    <source>
        <dbReference type="UniProtKB" id="A1T557"/>
    </source>
</evidence>
<evidence type="ECO:0000250" key="2">
    <source>
        <dbReference type="UniProtKB" id="O15503"/>
    </source>
</evidence>
<evidence type="ECO:0000250" key="3">
    <source>
        <dbReference type="UniProtKB" id="Q9Y5U4"/>
    </source>
</evidence>
<evidence type="ECO:0000303" key="4">
    <source>
    </source>
</evidence>
<evidence type="ECO:0000305" key="5"/>
<comment type="function">
    <text evidence="2">Oxysterol-binding protein that mediates feedback control of cholesterol synthesis by controlling both endoplasmic reticulum to Golgi transport of scap and degradation of hmgcr. Acts as a negative regulator of cholesterol biosynthesis by mediating the retention of the SCAP-SREBP complex in the endoplasmic reticulum, thereby blocking the processing of sterol regulatory element-binding proteins (SREBPs). Binds oxysterol, including 25-hydroxycholesterol, regulating interaction with scap and retention of the SCAP-SREBP complex in the endoplasmic reticulum. In presence of oxysterol, interacts with scap, retaining the SCAP-SREBP complex in the endoplasmic reticulum, thereby preventing scap from escorting SREBPs to the Golgi. Sterol deprivation reduces oxysterol-binding, disrupting the interaction between insig1 and scap, thereby promoting Golgi transport of the SCAP-SREBP complex, followed by processing and nuclear translocation of SREBPs. Also regulates cholesterol synthesis by regulating degradation of hmgcr.</text>
</comment>
<comment type="subunit">
    <text evidence="2">Interacts with scap; interaction is direct and only takes place in the presence of sterols; it prevents interaction between scap and the coat protein complex II (COPII). Associates with the SCAP-SREBP complex; association is mediated via its interaction with scap and only takes place in the presence of sterols.</text>
</comment>
<comment type="subcellular location">
    <subcellularLocation>
        <location evidence="2">Endoplasmic reticulum membrane</location>
        <topology evidence="2">Multi-pass membrane protein</topology>
    </subcellularLocation>
</comment>
<comment type="domain">
    <text evidence="2">The KxHxx motif mediates association with the coatomer complex.</text>
</comment>
<comment type="domain">
    <text evidence="3">Binds oxysterols in a pocket within their transmembrane domains and interacts with SCAP via transmembrane domains 3 and 4.</text>
</comment>
<comment type="similarity">
    <text evidence="5">Belongs to the INSIG family.</text>
</comment>
<protein>
    <recommendedName>
        <fullName evidence="4">Insulin-induced gene 1 protein</fullName>
        <shortName evidence="4">INSIG-1</shortName>
    </recommendedName>
</protein>